<evidence type="ECO:0000250" key="1">
    <source>
        <dbReference type="UniProtKB" id="Q9ZQS5"/>
    </source>
</evidence>
<evidence type="ECO:0000303" key="2">
    <source>
    </source>
</evidence>
<evidence type="ECO:0000303" key="3">
    <source>
    </source>
</evidence>
<evidence type="ECO:0000303" key="4">
    <source ref="1"/>
</evidence>
<evidence type="ECO:0000305" key="5"/>
<evidence type="ECO:0000305" key="6">
    <source>
    </source>
</evidence>
<proteinExistence type="evidence at protein level"/>
<accession>C0HJG3</accession>
<dbReference type="EMBL" id="AV438439">
    <property type="status" value="NOT_ANNOTATED_CDS"/>
    <property type="molecule type" value="mRNA"/>
</dbReference>
<dbReference type="EMBL" id="DR907360">
    <property type="status" value="NOT_ANNOTATED_CDS"/>
    <property type="molecule type" value="mRNA"/>
</dbReference>
<dbReference type="SMR" id="C0HJG3"/>
<dbReference type="GO" id="GO:0009535">
    <property type="term" value="C:chloroplast thylakoid membrane"/>
    <property type="evidence" value="ECO:0007669"/>
    <property type="project" value="UniProtKB-SubCell"/>
</dbReference>
<dbReference type="GO" id="GO:0019898">
    <property type="term" value="C:extrinsic component of membrane"/>
    <property type="evidence" value="ECO:0007669"/>
    <property type="project" value="InterPro"/>
</dbReference>
<dbReference type="GO" id="GO:0009523">
    <property type="term" value="C:photosystem II"/>
    <property type="evidence" value="ECO:0007669"/>
    <property type="project" value="InterPro"/>
</dbReference>
<dbReference type="GO" id="GO:0015979">
    <property type="term" value="P:photosynthesis"/>
    <property type="evidence" value="ECO:0007669"/>
    <property type="project" value="InterPro"/>
</dbReference>
<dbReference type="GO" id="GO:0042549">
    <property type="term" value="P:photosystem II stabilization"/>
    <property type="evidence" value="ECO:0007669"/>
    <property type="project" value="InterPro"/>
</dbReference>
<dbReference type="Gene3D" id="1.10.150.320">
    <property type="entry name" value="Photosystem II 12 kDa extrinsic protein"/>
    <property type="match status" value="1"/>
</dbReference>
<dbReference type="InterPro" id="IPR010527">
    <property type="entry name" value="PSII_PsbU"/>
</dbReference>
<dbReference type="InterPro" id="IPR006311">
    <property type="entry name" value="TAT_signal"/>
</dbReference>
<dbReference type="Pfam" id="PF06514">
    <property type="entry name" value="PsbU"/>
    <property type="match status" value="1"/>
</dbReference>
<dbReference type="SUPFAM" id="SSF81585">
    <property type="entry name" value="PsbU/PolX domain-like"/>
    <property type="match status" value="1"/>
</dbReference>
<dbReference type="PROSITE" id="PS51318">
    <property type="entry name" value="TAT"/>
    <property type="match status" value="1"/>
</dbReference>
<feature type="transit peptide" description="Chloroplast" evidence="5">
    <location>
        <begin position="1"/>
        <end position="35"/>
    </location>
</feature>
<feature type="transit peptide" description="Thylakoid" evidence="1">
    <location>
        <begin position="36"/>
        <end position="59"/>
    </location>
</feature>
<feature type="chain" id="PRO_0000438859" description="Photosystem II extrinsic protein U, chloroplastic" evidence="6">
    <location>
        <begin position="60"/>
        <end position="152"/>
    </location>
</feature>
<keyword id="KW-0150">Chloroplast</keyword>
<keyword id="KW-0903">Direct protein sequencing</keyword>
<keyword id="KW-0472">Membrane</keyword>
<keyword id="KW-0934">Plastid</keyword>
<keyword id="KW-0793">Thylakoid</keyword>
<keyword id="KW-0809">Transit peptide</keyword>
<name>PSBU_PYRYE</name>
<organism evidence="2">
    <name type="scientific">Pyropia yezoensis</name>
    <name type="common">Susabi-nori</name>
    <name type="synonym">Porphyra yezoensis</name>
    <dbReference type="NCBI Taxonomy" id="2788"/>
    <lineage>
        <taxon>Eukaryota</taxon>
        <taxon>Rhodophyta</taxon>
        <taxon>Bangiophyceae</taxon>
        <taxon>Bangiales</taxon>
        <taxon>Bangiaceae</taxon>
        <taxon>Pyropia</taxon>
    </lineage>
</organism>
<sequence>MDSTAFVGAAAPLRVAAAARSTICMAAADDKPVVSRRAALTGAAAAALAAVAGSLPALAETEYANVPFLGGSVIIDINNANVRAYAKYPGMYPTVAGLIATNGPFETVSDLYKIPGLTDLQIATLKKYEDKLVALTPTPEYELDKVNNGLYR</sequence>
<gene>
    <name evidence="1" type="primary">psbU</name>
</gene>
<protein>
    <recommendedName>
        <fullName evidence="5">Photosystem II extrinsic protein U, chloroplastic</fullName>
        <shortName evidence="5">PsbU</shortName>
    </recommendedName>
    <alternativeName>
        <fullName>Photosystem II 12 kDa extrinsic protein</fullName>
        <shortName>PS II complex 12 kDa extrinsic protein</shortName>
    </alternativeName>
    <alternativeName>
        <fullName evidence="3">Protein PYP2</fullName>
    </alternativeName>
</protein>
<reference evidence="5" key="1">
    <citation type="submission" date="2015-08" db="EMBL/GenBank/DDBJ databases">
        <title>The research on genes expression pattern of Porphyra yezoensis based on cDNA microarray.</title>
        <authorList>
            <person name="Zhou X.J."/>
            <person name="Mao Y.X."/>
        </authorList>
    </citation>
    <scope>NUCLEOTIDE SEQUENCE [MRNA] OF 1-148</scope>
    <source>
        <tissue evidence="4">Sporophyte</tissue>
    </source>
</reference>
<reference evidence="5" key="2">
    <citation type="journal article" date="2000" name="DNA Res.">
        <title>Generation of 10,154 expressed sequence tags from a leafy gametophyte of a marine red alga, Porphyra yezoensis.</title>
        <authorList>
            <person name="Nikaido I."/>
            <person name="Asamizu E."/>
            <person name="Nakajima M."/>
            <person name="Nakamura Y."/>
            <person name="Saga N."/>
            <person name="Tabata S."/>
        </authorList>
    </citation>
    <scope>NUCLEOTIDE SEQUENCE [LARGE SCALE MRNA] OF 29-152</scope>
    <source>
        <tissue evidence="2">Gametophyte</tissue>
    </source>
</reference>
<reference evidence="5" key="3">
    <citation type="journal article" date="2015" name="Int. J. Mol. Med.">
        <title>Chemical and mass spectrometry characterization of the red alga Pyropia yezoensis chemoprotective protein (PYP): protective activity of the N-terminal fragment of PYP1 against acetaminophen-induced cell death in Chang liver cells.</title>
        <authorList>
            <person name="Choi Y.H."/>
            <person name="Yamaguchi K."/>
            <person name="Oda T."/>
            <person name="Nam T.J."/>
        </authorList>
    </citation>
    <scope>PROTEIN SEQUENCE OF 60-69</scope>
    <scope>IDENTIFICATION BY MASS SPECTROMETRY</scope>
</reference>
<comment type="function">
    <text evidence="1">One of the extrinsic, lumenal subunits of photosystem II (PSII). PSII is a light-driven water plastoquinone oxidoreductase, using light energy to abstract electrons from H(2)O, generating a proton gradient subsequently used for ATP formation. The extrinsic proteins stabilize the structure of photosystem II oxygen-evolving complex (OEC), the ion environment of oxygen evolution and protect the OEC against heat-induced inactivation (By similarity).</text>
</comment>
<comment type="subunit">
    <text evidence="1">PSII is composed of 1 copy each of membrane proteins PsbA, PsbB, PsbC, PsbD, PsbE, PsbF, PsbH, PsbI, PsbJ, PsbK, PsbL, PsbM, PsbT, PsbX, PsbY, PsbZ, Psb30/Ycf12, at least 3 peripheral proteins of the oxygen-evolving complex and a large number of cofactors. It forms dimeric complexes. The oxygen-evolving complex in red algae is composed of PsbO (OEC33), PsbQ', cytochrome c-550 and PsbU.</text>
</comment>
<comment type="subcellular location">
    <subcellularLocation>
        <location evidence="1">Plastid</location>
        <location evidence="1">Chloroplast thylakoid membrane</location>
        <topology evidence="1">Peripheral membrane protein</topology>
        <orientation evidence="1">Lumenal side</orientation>
    </subcellularLocation>
</comment>
<comment type="PTM">
    <text evidence="5">Predicted to be translocated into the thylakoid lumen by the Tat system.</text>
</comment>
<comment type="similarity">
    <text evidence="5">Belongs to the PsbU family.</text>
</comment>